<feature type="chain" id="PRO_0000124939" description="Large ribosomal subunit protein uL5">
    <location>
        <begin position="1"/>
        <end position="180"/>
    </location>
</feature>
<sequence>MENRLKAQYEKEIVPALVDKFNYTSVMQVPKLAKIVLNMGVGDAVTNAKNLDEAVEELTLISGQKPLVTRAKKSIAGFRLREGMAIGAKVDLRGERMYDFLDKLINVSLPRVRDFHGVSTRSFDGRGNYTLGVREQLIFPEINYDNVNRVRGLDIVIVTTADSDEESRELLTQFGMPFAK</sequence>
<proteinExistence type="inferred from homology"/>
<organism>
    <name type="scientific">Lactiplantibacillus plantarum (strain ATCC BAA-793 / NCIMB 8826 / WCFS1)</name>
    <name type="common">Lactobacillus plantarum</name>
    <dbReference type="NCBI Taxonomy" id="220668"/>
    <lineage>
        <taxon>Bacteria</taxon>
        <taxon>Bacillati</taxon>
        <taxon>Bacillota</taxon>
        <taxon>Bacilli</taxon>
        <taxon>Lactobacillales</taxon>
        <taxon>Lactobacillaceae</taxon>
        <taxon>Lactiplantibacillus</taxon>
    </lineage>
</organism>
<keyword id="KW-1185">Reference proteome</keyword>
<keyword id="KW-0687">Ribonucleoprotein</keyword>
<keyword id="KW-0689">Ribosomal protein</keyword>
<keyword id="KW-0694">RNA-binding</keyword>
<keyword id="KW-0699">rRNA-binding</keyword>
<keyword id="KW-0820">tRNA-binding</keyword>
<protein>
    <recommendedName>
        <fullName evidence="1">Large ribosomal subunit protein uL5</fullName>
    </recommendedName>
    <alternativeName>
        <fullName evidence="2">50S ribosomal protein L5</fullName>
    </alternativeName>
</protein>
<reference key="1">
    <citation type="journal article" date="2003" name="Proc. Natl. Acad. Sci. U.S.A.">
        <title>Complete genome sequence of Lactobacillus plantarum WCFS1.</title>
        <authorList>
            <person name="Kleerebezem M."/>
            <person name="Boekhorst J."/>
            <person name="van Kranenburg R."/>
            <person name="Molenaar D."/>
            <person name="Kuipers O.P."/>
            <person name="Leer R."/>
            <person name="Tarchini R."/>
            <person name="Peters S.A."/>
            <person name="Sandbrink H.M."/>
            <person name="Fiers M.W.E.J."/>
            <person name="Stiekema W."/>
            <person name="Klein Lankhorst R.M."/>
            <person name="Bron P.A."/>
            <person name="Hoffer S.M."/>
            <person name="Nierop Groot M.N."/>
            <person name="Kerkhoven R."/>
            <person name="De Vries M."/>
            <person name="Ursing B."/>
            <person name="De Vos W.M."/>
            <person name="Siezen R.J."/>
        </authorList>
    </citation>
    <scope>NUCLEOTIDE SEQUENCE [LARGE SCALE GENOMIC DNA]</scope>
    <source>
        <strain>ATCC BAA-793 / NCIMB 8826 / WCFS1</strain>
    </source>
</reference>
<reference key="2">
    <citation type="journal article" date="2012" name="J. Bacteriol.">
        <title>Complete resequencing and reannotation of the Lactobacillus plantarum WCFS1 genome.</title>
        <authorList>
            <person name="Siezen R.J."/>
            <person name="Francke C."/>
            <person name="Renckens B."/>
            <person name="Boekhorst J."/>
            <person name="Wels M."/>
            <person name="Kleerebezem M."/>
            <person name="van Hijum S.A."/>
        </authorList>
    </citation>
    <scope>NUCLEOTIDE SEQUENCE [LARGE SCALE GENOMIC DNA]</scope>
    <scope>GENOME REANNOTATION</scope>
    <source>
        <strain>ATCC BAA-793 / NCIMB 8826 / WCFS1</strain>
    </source>
</reference>
<comment type="function">
    <text evidence="1">This is one of the proteins that bind and probably mediate the attachment of the 5S RNA into the large ribosomal subunit, where it forms part of the central protuberance. In the 70S ribosome it contacts protein S13 of the 30S subunit (bridge B1b), connecting the 2 subunits; this bridge is implicated in subunit movement. Contacts the P site tRNA; the 5S rRNA and some of its associated proteins might help stabilize positioning of ribosome-bound tRNAs.</text>
</comment>
<comment type="subunit">
    <text evidence="1">Part of the 50S ribosomal subunit; part of the 5S rRNA/L5/L18/L25 subcomplex. Contacts the 5S rRNA and the P site tRNA. Forms a bridge to the 30S subunit in the 70S ribosome.</text>
</comment>
<comment type="similarity">
    <text evidence="1">Belongs to the universal ribosomal protein uL5 family.</text>
</comment>
<dbReference type="EMBL" id="AL935263">
    <property type="protein sequence ID" value="CCC78456.1"/>
    <property type="molecule type" value="Genomic_DNA"/>
</dbReference>
<dbReference type="RefSeq" id="WP_003638072.1">
    <property type="nucleotide sequence ID" value="NC_004567.2"/>
</dbReference>
<dbReference type="RefSeq" id="YP_004888970.1">
    <property type="nucleotide sequence ID" value="NC_004567.2"/>
</dbReference>
<dbReference type="SMR" id="Q88XX4"/>
<dbReference type="STRING" id="220668.lp_1047"/>
<dbReference type="EnsemblBacteria" id="CCC78456">
    <property type="protein sequence ID" value="CCC78456"/>
    <property type="gene ID" value="lp_1047"/>
</dbReference>
<dbReference type="GeneID" id="79806697"/>
<dbReference type="KEGG" id="lpl:lp_1047"/>
<dbReference type="PATRIC" id="fig|220668.9.peg.883"/>
<dbReference type="eggNOG" id="COG0094">
    <property type="taxonomic scope" value="Bacteria"/>
</dbReference>
<dbReference type="HOGENOM" id="CLU_061015_2_1_9"/>
<dbReference type="OrthoDB" id="9806626at2"/>
<dbReference type="PhylomeDB" id="Q88XX4"/>
<dbReference type="Proteomes" id="UP000000432">
    <property type="component" value="Chromosome"/>
</dbReference>
<dbReference type="GO" id="GO:1990904">
    <property type="term" value="C:ribonucleoprotein complex"/>
    <property type="evidence" value="ECO:0007669"/>
    <property type="project" value="UniProtKB-KW"/>
</dbReference>
<dbReference type="GO" id="GO:0005840">
    <property type="term" value="C:ribosome"/>
    <property type="evidence" value="ECO:0007669"/>
    <property type="project" value="UniProtKB-KW"/>
</dbReference>
<dbReference type="GO" id="GO:0019843">
    <property type="term" value="F:rRNA binding"/>
    <property type="evidence" value="ECO:0007669"/>
    <property type="project" value="UniProtKB-UniRule"/>
</dbReference>
<dbReference type="GO" id="GO:0003735">
    <property type="term" value="F:structural constituent of ribosome"/>
    <property type="evidence" value="ECO:0007669"/>
    <property type="project" value="InterPro"/>
</dbReference>
<dbReference type="GO" id="GO:0000049">
    <property type="term" value="F:tRNA binding"/>
    <property type="evidence" value="ECO:0007669"/>
    <property type="project" value="UniProtKB-UniRule"/>
</dbReference>
<dbReference type="GO" id="GO:0006412">
    <property type="term" value="P:translation"/>
    <property type="evidence" value="ECO:0007669"/>
    <property type="project" value="UniProtKB-UniRule"/>
</dbReference>
<dbReference type="FunFam" id="3.30.1440.10:FF:000001">
    <property type="entry name" value="50S ribosomal protein L5"/>
    <property type="match status" value="1"/>
</dbReference>
<dbReference type="Gene3D" id="3.30.1440.10">
    <property type="match status" value="1"/>
</dbReference>
<dbReference type="HAMAP" id="MF_01333_B">
    <property type="entry name" value="Ribosomal_uL5_B"/>
    <property type="match status" value="1"/>
</dbReference>
<dbReference type="InterPro" id="IPR002132">
    <property type="entry name" value="Ribosomal_uL5"/>
</dbReference>
<dbReference type="InterPro" id="IPR020930">
    <property type="entry name" value="Ribosomal_uL5_bac-type"/>
</dbReference>
<dbReference type="InterPro" id="IPR031309">
    <property type="entry name" value="Ribosomal_uL5_C"/>
</dbReference>
<dbReference type="InterPro" id="IPR020929">
    <property type="entry name" value="Ribosomal_uL5_CS"/>
</dbReference>
<dbReference type="InterPro" id="IPR022803">
    <property type="entry name" value="Ribosomal_uL5_dom_sf"/>
</dbReference>
<dbReference type="InterPro" id="IPR031310">
    <property type="entry name" value="Ribosomal_uL5_N"/>
</dbReference>
<dbReference type="NCBIfam" id="NF000585">
    <property type="entry name" value="PRK00010.1"/>
    <property type="match status" value="1"/>
</dbReference>
<dbReference type="PANTHER" id="PTHR11994">
    <property type="entry name" value="60S RIBOSOMAL PROTEIN L11-RELATED"/>
    <property type="match status" value="1"/>
</dbReference>
<dbReference type="Pfam" id="PF00281">
    <property type="entry name" value="Ribosomal_L5"/>
    <property type="match status" value="1"/>
</dbReference>
<dbReference type="Pfam" id="PF00673">
    <property type="entry name" value="Ribosomal_L5_C"/>
    <property type="match status" value="1"/>
</dbReference>
<dbReference type="PIRSF" id="PIRSF002161">
    <property type="entry name" value="Ribosomal_L5"/>
    <property type="match status" value="1"/>
</dbReference>
<dbReference type="SUPFAM" id="SSF55282">
    <property type="entry name" value="RL5-like"/>
    <property type="match status" value="1"/>
</dbReference>
<dbReference type="PROSITE" id="PS00358">
    <property type="entry name" value="RIBOSOMAL_L5"/>
    <property type="match status" value="1"/>
</dbReference>
<accession>Q88XX4</accession>
<accession>F9UML7</accession>
<gene>
    <name evidence="1" type="primary">rplE</name>
    <name type="ordered locus">lp_1047</name>
</gene>
<evidence type="ECO:0000255" key="1">
    <source>
        <dbReference type="HAMAP-Rule" id="MF_01333"/>
    </source>
</evidence>
<evidence type="ECO:0000305" key="2"/>
<name>RL5_LACPL</name>